<feature type="chain" id="PRO_0000278007" description="Lipoyl synthase">
    <location>
        <begin position="1"/>
        <end position="355"/>
    </location>
</feature>
<feature type="domain" description="RPE1 insert">
    <location>
        <begin position="7"/>
        <end position="55"/>
    </location>
</feature>
<feature type="domain" description="Radical SAM core" evidence="2">
    <location>
        <begin position="98"/>
        <end position="314"/>
    </location>
</feature>
<feature type="binding site" evidence="1">
    <location>
        <position position="86"/>
    </location>
    <ligand>
        <name>[4Fe-4S] cluster</name>
        <dbReference type="ChEBI" id="CHEBI:49883"/>
        <label>1</label>
    </ligand>
</feature>
<feature type="binding site" evidence="1">
    <location>
        <position position="91"/>
    </location>
    <ligand>
        <name>[4Fe-4S] cluster</name>
        <dbReference type="ChEBI" id="CHEBI:49883"/>
        <label>1</label>
    </ligand>
</feature>
<feature type="binding site" evidence="1">
    <location>
        <position position="97"/>
    </location>
    <ligand>
        <name>[4Fe-4S] cluster</name>
        <dbReference type="ChEBI" id="CHEBI:49883"/>
        <label>1</label>
    </ligand>
</feature>
<feature type="binding site" evidence="1">
    <location>
        <position position="112"/>
    </location>
    <ligand>
        <name>[4Fe-4S] cluster</name>
        <dbReference type="ChEBI" id="CHEBI:49883"/>
        <label>2</label>
        <note>4Fe-4S-S-AdoMet</note>
    </ligand>
</feature>
<feature type="binding site" evidence="1">
    <location>
        <position position="116"/>
    </location>
    <ligand>
        <name>[4Fe-4S] cluster</name>
        <dbReference type="ChEBI" id="CHEBI:49883"/>
        <label>2</label>
        <note>4Fe-4S-S-AdoMet</note>
    </ligand>
</feature>
<feature type="binding site" evidence="1">
    <location>
        <position position="119"/>
    </location>
    <ligand>
        <name>[4Fe-4S] cluster</name>
        <dbReference type="ChEBI" id="CHEBI:49883"/>
        <label>2</label>
        <note>4Fe-4S-S-AdoMet</note>
    </ligand>
</feature>
<feature type="binding site" evidence="1">
    <location>
        <position position="325"/>
    </location>
    <ligand>
        <name>[4Fe-4S] cluster</name>
        <dbReference type="ChEBI" id="CHEBI:49883"/>
        <label>1</label>
    </ligand>
</feature>
<dbReference type="EC" id="2.8.1.8" evidence="1"/>
<dbReference type="EMBL" id="CP000087">
    <property type="protein sequence ID" value="ABE05390.1"/>
    <property type="molecule type" value="Genomic_DNA"/>
</dbReference>
<dbReference type="SMR" id="Q1RGX4"/>
<dbReference type="KEGG" id="rbe:RBE_1309"/>
<dbReference type="eggNOG" id="COG0320">
    <property type="taxonomic scope" value="Bacteria"/>
</dbReference>
<dbReference type="HOGENOM" id="CLU_033144_2_1_5"/>
<dbReference type="OrthoDB" id="9787898at2"/>
<dbReference type="UniPathway" id="UPA00538">
    <property type="reaction ID" value="UER00593"/>
</dbReference>
<dbReference type="Proteomes" id="UP000001951">
    <property type="component" value="Chromosome"/>
</dbReference>
<dbReference type="GO" id="GO:0005737">
    <property type="term" value="C:cytoplasm"/>
    <property type="evidence" value="ECO:0007669"/>
    <property type="project" value="UniProtKB-SubCell"/>
</dbReference>
<dbReference type="GO" id="GO:0051539">
    <property type="term" value="F:4 iron, 4 sulfur cluster binding"/>
    <property type="evidence" value="ECO:0007669"/>
    <property type="project" value="UniProtKB-UniRule"/>
</dbReference>
<dbReference type="GO" id="GO:0016992">
    <property type="term" value="F:lipoate synthase activity"/>
    <property type="evidence" value="ECO:0007669"/>
    <property type="project" value="UniProtKB-UniRule"/>
</dbReference>
<dbReference type="GO" id="GO:0046872">
    <property type="term" value="F:metal ion binding"/>
    <property type="evidence" value="ECO:0007669"/>
    <property type="project" value="UniProtKB-KW"/>
</dbReference>
<dbReference type="CDD" id="cd01335">
    <property type="entry name" value="Radical_SAM"/>
    <property type="match status" value="1"/>
</dbReference>
<dbReference type="FunFam" id="3.20.20.70:FF:000040">
    <property type="entry name" value="Lipoyl synthase"/>
    <property type="match status" value="1"/>
</dbReference>
<dbReference type="Gene3D" id="3.20.20.70">
    <property type="entry name" value="Aldolase class I"/>
    <property type="match status" value="1"/>
</dbReference>
<dbReference type="HAMAP" id="MF_00206">
    <property type="entry name" value="Lipoyl_synth"/>
    <property type="match status" value="1"/>
</dbReference>
<dbReference type="InterPro" id="IPR013785">
    <property type="entry name" value="Aldolase_TIM"/>
</dbReference>
<dbReference type="InterPro" id="IPR006638">
    <property type="entry name" value="Elp3/MiaA/NifB-like_rSAM"/>
</dbReference>
<dbReference type="InterPro" id="IPR031691">
    <property type="entry name" value="LIAS_N"/>
</dbReference>
<dbReference type="InterPro" id="IPR003698">
    <property type="entry name" value="Lipoyl_synth"/>
</dbReference>
<dbReference type="InterPro" id="IPR005728">
    <property type="entry name" value="RPE1"/>
</dbReference>
<dbReference type="InterPro" id="IPR007197">
    <property type="entry name" value="rSAM"/>
</dbReference>
<dbReference type="NCBIfam" id="TIGR00510">
    <property type="entry name" value="lipA"/>
    <property type="match status" value="1"/>
</dbReference>
<dbReference type="NCBIfam" id="NF004019">
    <property type="entry name" value="PRK05481.1"/>
    <property type="match status" value="1"/>
</dbReference>
<dbReference type="NCBIfam" id="NF009544">
    <property type="entry name" value="PRK12928.1"/>
    <property type="match status" value="1"/>
</dbReference>
<dbReference type="NCBIfam" id="TIGR01045">
    <property type="entry name" value="RPE1"/>
    <property type="match status" value="1"/>
</dbReference>
<dbReference type="PANTHER" id="PTHR10949">
    <property type="entry name" value="LIPOYL SYNTHASE"/>
    <property type="match status" value="1"/>
</dbReference>
<dbReference type="PANTHER" id="PTHR10949:SF0">
    <property type="entry name" value="LIPOYL SYNTHASE, MITOCHONDRIAL"/>
    <property type="match status" value="1"/>
</dbReference>
<dbReference type="Pfam" id="PF16881">
    <property type="entry name" value="LIAS_N"/>
    <property type="match status" value="1"/>
</dbReference>
<dbReference type="Pfam" id="PF04055">
    <property type="entry name" value="Radical_SAM"/>
    <property type="match status" value="1"/>
</dbReference>
<dbReference type="PIRSF" id="PIRSF005963">
    <property type="entry name" value="Lipoyl_synth"/>
    <property type="match status" value="1"/>
</dbReference>
<dbReference type="SFLD" id="SFLDF00271">
    <property type="entry name" value="lipoyl_synthase"/>
    <property type="match status" value="1"/>
</dbReference>
<dbReference type="SFLD" id="SFLDS00029">
    <property type="entry name" value="Radical_SAM"/>
    <property type="match status" value="1"/>
</dbReference>
<dbReference type="SMART" id="SM00729">
    <property type="entry name" value="Elp3"/>
    <property type="match status" value="1"/>
</dbReference>
<dbReference type="SUPFAM" id="SSF102114">
    <property type="entry name" value="Radical SAM enzymes"/>
    <property type="match status" value="1"/>
</dbReference>
<dbReference type="PROSITE" id="PS51918">
    <property type="entry name" value="RADICAL_SAM"/>
    <property type="match status" value="1"/>
</dbReference>
<comment type="function">
    <text evidence="1">Catalyzes the radical-mediated insertion of two sulfur atoms into the C-6 and C-8 positions of the octanoyl moiety bound to the lipoyl domains of lipoate-dependent enzymes, thereby converting the octanoylated domains into lipoylated derivatives.</text>
</comment>
<comment type="catalytic activity">
    <reaction evidence="1">
        <text>[[Fe-S] cluster scaffold protein carrying a second [4Fe-4S](2+) cluster] + N(6)-octanoyl-L-lysyl-[protein] + 2 oxidized [2Fe-2S]-[ferredoxin] + 2 S-adenosyl-L-methionine + 4 H(+) = [[Fe-S] cluster scaffold protein] + N(6)-[(R)-dihydrolipoyl]-L-lysyl-[protein] + 4 Fe(3+) + 2 hydrogen sulfide + 2 5'-deoxyadenosine + 2 L-methionine + 2 reduced [2Fe-2S]-[ferredoxin]</text>
        <dbReference type="Rhea" id="RHEA:16585"/>
        <dbReference type="Rhea" id="RHEA-COMP:9928"/>
        <dbReference type="Rhea" id="RHEA-COMP:10000"/>
        <dbReference type="Rhea" id="RHEA-COMP:10001"/>
        <dbReference type="Rhea" id="RHEA-COMP:10475"/>
        <dbReference type="Rhea" id="RHEA-COMP:14568"/>
        <dbReference type="Rhea" id="RHEA-COMP:14569"/>
        <dbReference type="ChEBI" id="CHEBI:15378"/>
        <dbReference type="ChEBI" id="CHEBI:17319"/>
        <dbReference type="ChEBI" id="CHEBI:29034"/>
        <dbReference type="ChEBI" id="CHEBI:29919"/>
        <dbReference type="ChEBI" id="CHEBI:33722"/>
        <dbReference type="ChEBI" id="CHEBI:33737"/>
        <dbReference type="ChEBI" id="CHEBI:33738"/>
        <dbReference type="ChEBI" id="CHEBI:57844"/>
        <dbReference type="ChEBI" id="CHEBI:59789"/>
        <dbReference type="ChEBI" id="CHEBI:78809"/>
        <dbReference type="ChEBI" id="CHEBI:83100"/>
        <dbReference type="EC" id="2.8.1.8"/>
    </reaction>
</comment>
<comment type="cofactor">
    <cofactor evidence="1">
        <name>[4Fe-4S] cluster</name>
        <dbReference type="ChEBI" id="CHEBI:49883"/>
    </cofactor>
    <text evidence="1">Binds 2 [4Fe-4S] clusters per subunit. One cluster is coordinated with 3 cysteines and an exchangeable S-adenosyl-L-methionine.</text>
</comment>
<comment type="pathway">
    <text evidence="1">Protein modification; protein lipoylation via endogenous pathway; protein N(6)-(lipoyl)lysine from octanoyl-[acyl-carrier-protein]: step 2/2.</text>
</comment>
<comment type="subcellular location">
    <subcellularLocation>
        <location evidence="1">Cytoplasm</location>
    </subcellularLocation>
</comment>
<comment type="similarity">
    <text evidence="1">Belongs to the radical SAM superfamily. Lipoyl synthase family.</text>
</comment>
<organism>
    <name type="scientific">Rickettsia bellii (strain RML369-C)</name>
    <dbReference type="NCBI Taxonomy" id="336407"/>
    <lineage>
        <taxon>Bacteria</taxon>
        <taxon>Pseudomonadati</taxon>
        <taxon>Pseudomonadota</taxon>
        <taxon>Alphaproteobacteria</taxon>
        <taxon>Rickettsiales</taxon>
        <taxon>Rickettsiaceae</taxon>
        <taxon>Rickettsieae</taxon>
        <taxon>Rickettsia</taxon>
        <taxon>belli group</taxon>
    </lineage>
</organism>
<keyword id="KW-0004">4Fe-4S</keyword>
<keyword id="KW-0963">Cytoplasm</keyword>
<keyword id="KW-0408">Iron</keyword>
<keyword id="KW-0411">Iron-sulfur</keyword>
<keyword id="KW-0479">Metal-binding</keyword>
<keyword id="KW-0949">S-adenosyl-L-methionine</keyword>
<keyword id="KW-0808">Transferase</keyword>
<evidence type="ECO:0000255" key="1">
    <source>
        <dbReference type="HAMAP-Rule" id="MF_00206"/>
    </source>
</evidence>
<evidence type="ECO:0000255" key="2">
    <source>
        <dbReference type="PROSITE-ProRule" id="PRU01266"/>
    </source>
</evidence>
<name>LIPA_RICBR</name>
<proteinExistence type="inferred from homology"/>
<sequence length="355" mass="39989">MTNLDRHLSKFAYREEFAGNTEVLATAAYKEDCADASTGLTPKLPLEVEFGKMSKRPDWIKVKAPNSSEYYNTKDLIKNLKLNTVCEEAACPNIGECWSKKHATVMILGSVCTRACRFCNVKTGRPDLLDPHEPQRLAEAVQKLGLKHVVITSVDRDDLEDGGATHFAECISEIRKSSPNTTIEILTPDFLRKDGAAEIIANAKPDVFNHNVETVPSLYNTIRPGARYYNSLSLLHNIKKLSPEVFTKSGMMVGLGEEISEVVQVMDDLREAKVDFLTIGQYLQPTKNHAEVAKYVTPEEFKYLERVARTKGFLMVSASPLTRSSYHADEDFEKLKENYRHRHCEERRSIDVAIS</sequence>
<protein>
    <recommendedName>
        <fullName evidence="1">Lipoyl synthase</fullName>
        <ecNumber evidence="1">2.8.1.8</ecNumber>
    </recommendedName>
    <alternativeName>
        <fullName evidence="1">Lip-syn</fullName>
        <shortName evidence="1">LS</shortName>
    </alternativeName>
    <alternativeName>
        <fullName evidence="1">Lipoate synthase</fullName>
    </alternativeName>
    <alternativeName>
        <fullName evidence="1">Lipoic acid synthase</fullName>
    </alternativeName>
    <alternativeName>
        <fullName evidence="1">Sulfur insertion protein LipA</fullName>
    </alternativeName>
</protein>
<gene>
    <name evidence="1" type="primary">lipA</name>
    <name type="ordered locus">RBE_1309</name>
</gene>
<reference key="1">
    <citation type="journal article" date="2006" name="PLoS Genet.">
        <title>Genome sequence of Rickettsia bellii illuminates the role of amoebae in gene exchanges between intracellular pathogens.</title>
        <authorList>
            <person name="Ogata H."/>
            <person name="La Scola B."/>
            <person name="Audic S."/>
            <person name="Renesto P."/>
            <person name="Blanc G."/>
            <person name="Robert C."/>
            <person name="Fournier P.-E."/>
            <person name="Claverie J.-M."/>
            <person name="Raoult D."/>
        </authorList>
    </citation>
    <scope>NUCLEOTIDE SEQUENCE [LARGE SCALE GENOMIC DNA]</scope>
    <source>
        <strain>RML369-C</strain>
    </source>
</reference>
<accession>Q1RGX4</accession>